<evidence type="ECO:0000250" key="1"/>
<evidence type="ECO:0000255" key="2"/>
<evidence type="ECO:0000305" key="3"/>
<reference key="1">
    <citation type="journal article" date="2006" name="Science">
        <title>The genome of black cottonwood, Populus trichocarpa (Torr. &amp; Gray).</title>
        <authorList>
            <person name="Tuskan G.A."/>
            <person name="Difazio S."/>
            <person name="Jansson S."/>
            <person name="Bohlmann J."/>
            <person name="Grigoriev I."/>
            <person name="Hellsten U."/>
            <person name="Putnam N."/>
            <person name="Ralph S."/>
            <person name="Rombauts S."/>
            <person name="Salamov A."/>
            <person name="Schein J."/>
            <person name="Sterck L."/>
            <person name="Aerts A."/>
            <person name="Bhalerao R.R."/>
            <person name="Bhalerao R.P."/>
            <person name="Blaudez D."/>
            <person name="Boerjan W."/>
            <person name="Brun A."/>
            <person name="Brunner A."/>
            <person name="Busov V."/>
            <person name="Campbell M."/>
            <person name="Carlson J."/>
            <person name="Chalot M."/>
            <person name="Chapman J."/>
            <person name="Chen G.-L."/>
            <person name="Cooper D."/>
            <person name="Coutinho P.M."/>
            <person name="Couturier J."/>
            <person name="Covert S."/>
            <person name="Cronk Q."/>
            <person name="Cunningham R."/>
            <person name="Davis J."/>
            <person name="Degroeve S."/>
            <person name="Dejardin A."/>
            <person name="dePamphilis C.W."/>
            <person name="Detter J."/>
            <person name="Dirks B."/>
            <person name="Dubchak I."/>
            <person name="Duplessis S."/>
            <person name="Ehlting J."/>
            <person name="Ellis B."/>
            <person name="Gendler K."/>
            <person name="Goodstein D."/>
            <person name="Gribskov M."/>
            <person name="Grimwood J."/>
            <person name="Groover A."/>
            <person name="Gunter L."/>
            <person name="Hamberger B."/>
            <person name="Heinze B."/>
            <person name="Helariutta Y."/>
            <person name="Henrissat B."/>
            <person name="Holligan D."/>
            <person name="Holt R."/>
            <person name="Huang W."/>
            <person name="Islam-Faridi N."/>
            <person name="Jones S."/>
            <person name="Jones-Rhoades M."/>
            <person name="Jorgensen R."/>
            <person name="Joshi C."/>
            <person name="Kangasjaervi J."/>
            <person name="Karlsson J."/>
            <person name="Kelleher C."/>
            <person name="Kirkpatrick R."/>
            <person name="Kirst M."/>
            <person name="Kohler A."/>
            <person name="Kalluri U."/>
            <person name="Larimer F."/>
            <person name="Leebens-Mack J."/>
            <person name="Leple J.-C."/>
            <person name="Locascio P."/>
            <person name="Lou Y."/>
            <person name="Lucas S."/>
            <person name="Martin F."/>
            <person name="Montanini B."/>
            <person name="Napoli C."/>
            <person name="Nelson D.R."/>
            <person name="Nelson C."/>
            <person name="Nieminen K."/>
            <person name="Nilsson O."/>
            <person name="Pereda V."/>
            <person name="Peter G."/>
            <person name="Philippe R."/>
            <person name="Pilate G."/>
            <person name="Poliakov A."/>
            <person name="Razumovskaya J."/>
            <person name="Richardson P."/>
            <person name="Rinaldi C."/>
            <person name="Ritland K."/>
            <person name="Rouze P."/>
            <person name="Ryaboy D."/>
            <person name="Schmutz J."/>
            <person name="Schrader J."/>
            <person name="Segerman B."/>
            <person name="Shin H."/>
            <person name="Siddiqui A."/>
            <person name="Sterky F."/>
            <person name="Terry A."/>
            <person name="Tsai C.-J."/>
            <person name="Uberbacher E."/>
            <person name="Unneberg P."/>
            <person name="Vahala J."/>
            <person name="Wall K."/>
            <person name="Wessler S."/>
            <person name="Yang G."/>
            <person name="Yin T."/>
            <person name="Douglas C."/>
            <person name="Marra M."/>
            <person name="Sandberg G."/>
            <person name="Van de Peer Y."/>
            <person name="Rokhsar D.S."/>
        </authorList>
    </citation>
    <scope>NUCLEOTIDE SEQUENCE [LARGE SCALE GENOMIC DNA]</scope>
    <source>
        <strain>cv. Nisqually</strain>
    </source>
</reference>
<reference key="2">
    <citation type="submission" date="2008-12" db="EMBL/GenBank/DDBJ databases">
        <authorList>
            <consortium name="US DOE Joint Genome Institute (JGI-PGF)"/>
            <person name="Grigoriev I.V."/>
            <person name="Terry A."/>
            <person name="Salamov A.A."/>
            <person name="Otillar R."/>
            <person name="Lou Y."/>
            <person name="Lucas S."/>
            <person name="Hammon N."/>
            <person name="Glavina del Rio T."/>
            <person name="Detter J."/>
            <person name="Kalin E."/>
            <person name="Tice H."/>
            <person name="Pitluck S."/>
            <person name="Chapman J."/>
            <person name="Putnam N.H."/>
            <person name="Brunner A."/>
            <person name="Busov V."/>
            <person name="Campbell M."/>
            <person name="Chalot M."/>
            <person name="Covert S."/>
            <person name="Davis J."/>
            <person name="DiFazio S."/>
            <person name="Gribskov M."/>
            <person name="Gunter L."/>
            <person name="Hamberger B."/>
            <person name="Jansson S."/>
            <person name="Joshi C."/>
            <person name="Larimer F."/>
            <person name="Martin F."/>
            <person name="Napoli C."/>
            <person name="Nelson D."/>
            <person name="Ralph S."/>
            <person name="Rombauts S."/>
            <person name="Rouze P."/>
            <person name="Schrader J."/>
            <person name="Tsai C."/>
            <person name="Vahala J."/>
            <person name="Tuskan G."/>
            <person name="Rokhsar D."/>
        </authorList>
    </citation>
    <scope>GENOME REANNOTATION</scope>
    <source>
        <strain>cv. Nisqually</strain>
    </source>
</reference>
<reference key="3">
    <citation type="journal article" date="2014" name="Plant Physiol.">
        <title>Functional and evolutionary analysis of the CASPARIAN STRIP MEMBRANE DOMAIN PROTEIN family.</title>
        <authorList>
            <person name="Roppolo D."/>
            <person name="Boeckmann B."/>
            <person name="Pfister A."/>
            <person name="Boutet E."/>
            <person name="Rubio M.C."/>
            <person name="Denervaud-Tendon V."/>
            <person name="Vermeer J.E."/>
            <person name="Gheyselinck J."/>
            <person name="Xenarios I."/>
            <person name="Geldner N."/>
        </authorList>
    </citation>
    <scope>GENE FAMILY</scope>
    <scope>NOMENCLATURE</scope>
</reference>
<comment type="subunit">
    <text evidence="1">Homodimer and heterodimers.</text>
</comment>
<comment type="subcellular location">
    <subcellularLocation>
        <location evidence="1">Cell membrane</location>
        <topology evidence="1">Multi-pass membrane protein</topology>
    </subcellularLocation>
</comment>
<comment type="similarity">
    <text evidence="3">Belongs to the Casparian strip membrane proteins (CASP) family.</text>
</comment>
<dbReference type="EMBL" id="CM009293">
    <property type="protein sequence ID" value="EEE86310.1"/>
    <property type="molecule type" value="Genomic_DNA"/>
</dbReference>
<dbReference type="RefSeq" id="XP_002305799.1">
    <property type="nucleotide sequence ID" value="XM_002305763.1"/>
</dbReference>
<dbReference type="SMR" id="B9H2V1"/>
<dbReference type="STRING" id="3694.B9H2V1"/>
<dbReference type="KEGG" id="pop:7477406"/>
<dbReference type="eggNOG" id="ENOG502RZXX">
    <property type="taxonomic scope" value="Eukaryota"/>
</dbReference>
<dbReference type="HOGENOM" id="CLU_066104_3_0_1"/>
<dbReference type="InParanoid" id="B9H2V1"/>
<dbReference type="OrthoDB" id="1906221at2759"/>
<dbReference type="Proteomes" id="UP000006729">
    <property type="component" value="Chromosome 4"/>
</dbReference>
<dbReference type="ExpressionAtlas" id="B9H2V1">
    <property type="expression patterns" value="baseline"/>
</dbReference>
<dbReference type="GO" id="GO:0005886">
    <property type="term" value="C:plasma membrane"/>
    <property type="evidence" value="ECO:0000318"/>
    <property type="project" value="GO_Central"/>
</dbReference>
<dbReference type="InterPro" id="IPR006459">
    <property type="entry name" value="CASP/CASPL"/>
</dbReference>
<dbReference type="InterPro" id="IPR006702">
    <property type="entry name" value="CASP_dom"/>
</dbReference>
<dbReference type="InterPro" id="IPR044173">
    <property type="entry name" value="CASPL"/>
</dbReference>
<dbReference type="NCBIfam" id="TIGR01569">
    <property type="entry name" value="A_tha_TIGR01569"/>
    <property type="match status" value="1"/>
</dbReference>
<dbReference type="PANTHER" id="PTHR36488">
    <property type="entry name" value="CASP-LIKE PROTEIN 1U1"/>
    <property type="match status" value="1"/>
</dbReference>
<dbReference type="PANTHER" id="PTHR36488:SF8">
    <property type="entry name" value="CASP-LIKE PROTEIN 1U1"/>
    <property type="match status" value="1"/>
</dbReference>
<dbReference type="Pfam" id="PF04535">
    <property type="entry name" value="CASP_dom"/>
    <property type="match status" value="1"/>
</dbReference>
<keyword id="KW-1003">Cell membrane</keyword>
<keyword id="KW-0325">Glycoprotein</keyword>
<keyword id="KW-0472">Membrane</keyword>
<keyword id="KW-1185">Reference proteome</keyword>
<keyword id="KW-0812">Transmembrane</keyword>
<keyword id="KW-1133">Transmembrane helix</keyword>
<proteinExistence type="inferred from homology"/>
<accession>B9H2V1</accession>
<sequence length="163" mass="17676">MAKIKKIFTNFLRLLALAATVVAIVFMVTSHDSAQVLNLTFTVKYSNTPVFKYFVIAEAIAGGYIVISILLSFKSLFWRLLVILDMVTAVLLTSSISAALAIAQVGKKGNTHAGWLPVCEQVPDFCDQVTIALIAGFAAAIIYFVLLLCSLYVVLSPIFVVTP</sequence>
<feature type="chain" id="PRO_0000412037" description="CASP-like protein 1C3">
    <location>
        <begin position="1"/>
        <end position="163"/>
    </location>
</feature>
<feature type="topological domain" description="Cytoplasmic" evidence="2">
    <location>
        <begin position="1"/>
        <end position="6"/>
    </location>
</feature>
<feature type="transmembrane region" description="Helical" evidence="2">
    <location>
        <begin position="7"/>
        <end position="27"/>
    </location>
</feature>
<feature type="topological domain" description="Extracellular" evidence="2">
    <location>
        <begin position="28"/>
        <end position="52"/>
    </location>
</feature>
<feature type="transmembrane region" description="Helical" evidence="2">
    <location>
        <begin position="53"/>
        <end position="73"/>
    </location>
</feature>
<feature type="topological domain" description="Cytoplasmic" evidence="2">
    <location>
        <begin position="74"/>
        <end position="79"/>
    </location>
</feature>
<feature type="transmembrane region" description="Helical" evidence="2">
    <location>
        <begin position="80"/>
        <end position="100"/>
    </location>
</feature>
<feature type="topological domain" description="Extracellular" evidence="2">
    <location>
        <begin position="101"/>
        <end position="128"/>
    </location>
</feature>
<feature type="transmembrane region" description="Helical" evidence="2">
    <location>
        <begin position="129"/>
        <end position="149"/>
    </location>
</feature>
<feature type="topological domain" description="Cytoplasmic" evidence="2">
    <location>
        <begin position="150"/>
        <end position="163"/>
    </location>
</feature>
<feature type="glycosylation site" description="N-linked (GlcNAc...) asparagine" evidence="2">
    <location>
        <position position="38"/>
    </location>
</feature>
<gene>
    <name type="ORF">POPTRDRAFT_758901</name>
</gene>
<name>CSPL6_POPTR</name>
<organism>
    <name type="scientific">Populus trichocarpa</name>
    <name type="common">Western balsam poplar</name>
    <name type="synonym">Populus balsamifera subsp. trichocarpa</name>
    <dbReference type="NCBI Taxonomy" id="3694"/>
    <lineage>
        <taxon>Eukaryota</taxon>
        <taxon>Viridiplantae</taxon>
        <taxon>Streptophyta</taxon>
        <taxon>Embryophyta</taxon>
        <taxon>Tracheophyta</taxon>
        <taxon>Spermatophyta</taxon>
        <taxon>Magnoliopsida</taxon>
        <taxon>eudicotyledons</taxon>
        <taxon>Gunneridae</taxon>
        <taxon>Pentapetalae</taxon>
        <taxon>rosids</taxon>
        <taxon>fabids</taxon>
        <taxon>Malpighiales</taxon>
        <taxon>Salicaceae</taxon>
        <taxon>Saliceae</taxon>
        <taxon>Populus</taxon>
    </lineage>
</organism>
<protein>
    <recommendedName>
        <fullName>CASP-like protein 1C3</fullName>
        <shortName>PtCASPL1C3</shortName>
    </recommendedName>
</protein>